<feature type="signal peptide" evidence="3">
    <location>
        <begin position="1"/>
        <end position="16"/>
    </location>
</feature>
<feature type="chain" id="PRO_0000004183" description="Calreticulin">
    <location>
        <begin position="17"/>
        <end position="393"/>
    </location>
</feature>
<feature type="repeat" description="1-1">
    <location>
        <begin position="189"/>
        <end position="200"/>
    </location>
</feature>
<feature type="repeat" description="1-2">
    <location>
        <begin position="208"/>
        <end position="219"/>
    </location>
</feature>
<feature type="repeat" description="1-3">
    <location>
        <begin position="225"/>
        <end position="236"/>
    </location>
</feature>
<feature type="repeat" description="1-4">
    <location>
        <begin position="242"/>
        <end position="253"/>
    </location>
</feature>
<feature type="repeat" description="2-1">
    <location>
        <begin position="257"/>
        <end position="267"/>
    </location>
</feature>
<feature type="repeat" description="2-2">
    <location>
        <begin position="271"/>
        <end position="281"/>
    </location>
</feature>
<feature type="repeat" description="2-3">
    <location>
        <begin position="285"/>
        <end position="295"/>
    </location>
</feature>
<feature type="region of interest" description="4 X 12 AA approximate repeats">
    <location>
        <begin position="189"/>
        <end position="253"/>
    </location>
</feature>
<feature type="region of interest" description="Disordered" evidence="4">
    <location>
        <begin position="194"/>
        <end position="277"/>
    </location>
</feature>
<feature type="region of interest" description="3 X 11 AA approximate repeats">
    <location>
        <begin position="257"/>
        <end position="295"/>
    </location>
</feature>
<feature type="region of interest" description="Disordered" evidence="4">
    <location>
        <begin position="351"/>
        <end position="393"/>
    </location>
</feature>
<feature type="short sequence motif" description="Prevents secretion from ER">
    <location>
        <begin position="390"/>
        <end position="393"/>
    </location>
</feature>
<feature type="compositionally biased region" description="Basic and acidic residues" evidence="4">
    <location>
        <begin position="202"/>
        <end position="216"/>
    </location>
</feature>
<feature type="compositionally biased region" description="Acidic residues" evidence="4">
    <location>
        <begin position="217"/>
        <end position="226"/>
    </location>
</feature>
<feature type="compositionally biased region" description="Basic and acidic residues" evidence="4">
    <location>
        <begin position="227"/>
        <end position="249"/>
    </location>
</feature>
<feature type="compositionally biased region" description="Basic and acidic residues" evidence="4">
    <location>
        <begin position="258"/>
        <end position="277"/>
    </location>
</feature>
<feature type="binding site" evidence="2">
    <location>
        <position position="107"/>
    </location>
    <ligand>
        <name>an alpha-D-glucoside</name>
        <dbReference type="ChEBI" id="CHEBI:22390"/>
    </ligand>
</feature>
<feature type="binding site" evidence="2">
    <location>
        <position position="109"/>
    </location>
    <ligand>
        <name>an alpha-D-glucoside</name>
        <dbReference type="ChEBI" id="CHEBI:22390"/>
    </ligand>
</feature>
<feature type="binding site" evidence="2">
    <location>
        <position position="126"/>
    </location>
    <ligand>
        <name>an alpha-D-glucoside</name>
        <dbReference type="ChEBI" id="CHEBI:22390"/>
    </ligand>
</feature>
<feature type="binding site" evidence="2">
    <location>
        <position position="133"/>
    </location>
    <ligand>
        <name>an alpha-D-glucoside</name>
        <dbReference type="ChEBI" id="CHEBI:22390"/>
    </ligand>
</feature>
<feature type="binding site" evidence="2">
    <location>
        <position position="315"/>
    </location>
    <ligand>
        <name>an alpha-D-glucoside</name>
        <dbReference type="ChEBI" id="CHEBI:22390"/>
    </ligand>
</feature>
<feature type="glycosylation site" description="N-linked (GlcNAc...) asparagine" evidence="3">
    <location>
        <position position="27"/>
    </location>
</feature>
<feature type="disulfide bond" evidence="1">
    <location>
        <begin position="103"/>
        <end position="135"/>
    </location>
</feature>
<feature type="sequence conflict" description="In Ref. 2; AAA19024." evidence="5" ref="2">
    <original>MV</original>
    <variation>IL</variation>
    <location>
        <begin position="89"/>
        <end position="90"/>
    </location>
</feature>
<feature type="sequence conflict" description="In Ref. 2; AAA19024." evidence="5" ref="2">
    <location>
        <begin position="188"/>
        <end position="207"/>
    </location>
</feature>
<feature type="sequence conflict" description="In Ref. 2; AAA19024." evidence="5" ref="2">
    <original>Y</original>
    <variation>D</variation>
    <location>
        <position position="378"/>
    </location>
</feature>
<keyword id="KW-0106">Calcium</keyword>
<keyword id="KW-0143">Chaperone</keyword>
<keyword id="KW-1015">Disulfide bond</keyword>
<keyword id="KW-0256">Endoplasmic reticulum</keyword>
<keyword id="KW-0325">Glycoprotein</keyword>
<keyword id="KW-0430">Lectin</keyword>
<keyword id="KW-0479">Metal-binding</keyword>
<keyword id="KW-1185">Reference proteome</keyword>
<keyword id="KW-0677">Repeat</keyword>
<keyword id="KW-0732">Signal</keyword>
<keyword id="KW-0862">Zinc</keyword>
<proteinExistence type="evidence at transcript level"/>
<name>CALR_SCHMA</name>
<accession>Q06814</accession>
<accession>Q26562</accession>
<evidence type="ECO:0000250" key="1"/>
<evidence type="ECO:0000250" key="2">
    <source>
        <dbReference type="UniProtKB" id="P14211"/>
    </source>
</evidence>
<evidence type="ECO:0000255" key="3"/>
<evidence type="ECO:0000256" key="4">
    <source>
        <dbReference type="SAM" id="MobiDB-lite"/>
    </source>
</evidence>
<evidence type="ECO:0000305" key="5"/>
<protein>
    <recommendedName>
        <fullName>Calreticulin</fullName>
    </recommendedName>
    <alternativeName>
        <fullName>Protein SM4</fullName>
    </alternativeName>
</protein>
<reference key="1">
    <citation type="journal article" date="1993" name="Mol. Biochem. Parasitol.">
        <title>Cloning of the gene encoding a Schistosoma mansoni antigen homologous to human Ro/SS-A autoantigen.</title>
        <authorList>
            <person name="Khalife J."/>
            <person name="Trottein F."/>
            <person name="Schacht A.-M."/>
            <person name="Godin C."/>
            <person name="Pierce R.J."/>
            <person name="Capron A."/>
        </authorList>
    </citation>
    <scope>NUCLEOTIDE SEQUENCE [MRNA]</scope>
    <source>
        <strain>Puerto Rican</strain>
    </source>
</reference>
<reference key="2">
    <citation type="journal article" date="1993" name="Mol. Biochem. Parasitol.">
        <title>Cloning and sequencing of the gene encoding Schistosoma mansoni calreticulin.</title>
        <authorList>
            <person name="Khalife J."/>
            <person name="Pierce R.J."/>
            <person name="Godin C."/>
            <person name="Capron A."/>
        </authorList>
    </citation>
    <scope>NUCLEOTIDE SEQUENCE [GENOMIC DNA]</scope>
    <source>
        <strain>Puerto Rican</strain>
    </source>
</reference>
<organism>
    <name type="scientific">Schistosoma mansoni</name>
    <name type="common">Blood fluke</name>
    <dbReference type="NCBI Taxonomy" id="6183"/>
    <lineage>
        <taxon>Eukaryota</taxon>
        <taxon>Metazoa</taxon>
        <taxon>Spiralia</taxon>
        <taxon>Lophotrochozoa</taxon>
        <taxon>Platyhelminthes</taxon>
        <taxon>Trematoda</taxon>
        <taxon>Digenea</taxon>
        <taxon>Strigeidida</taxon>
        <taxon>Schistosomatoidea</taxon>
        <taxon>Schistosomatidae</taxon>
        <taxon>Schistosoma</taxon>
    </lineage>
</organism>
<comment type="function">
    <text evidence="1">Molecular calcium-binding chaperone promoting folding, oligomeric assembly and quality control in the ER via the calreticulin/calnexin cycle. This lectin may interact transiently with almost all of the monoglucosylated glycoproteins that are synthesized in the ER (By similarity).</text>
</comment>
<comment type="subcellular location">
    <subcellularLocation>
        <location>Endoplasmic reticulum lumen</location>
    </subcellularLocation>
</comment>
<comment type="domain">
    <text evidence="1">Can be divided into a N-terminal globular domain, a proline-rich P-domain forming an elongated arm-like structure and a C-terminal acidic domain. The P-domain binds one molecule of calcium with high affinity, whereas the acidic C-domain binds multiple calcium ions with low affinity (By similarity).</text>
</comment>
<comment type="domain">
    <text evidence="1">The interaction with glycans occurs through a binding site in the globular lectin domain.</text>
</comment>
<comment type="domain">
    <text evidence="1">The zinc binding sites are localized to the N-domain.</text>
</comment>
<comment type="similarity">
    <text evidence="5">Belongs to the calreticulin family.</text>
</comment>
<sequence>MLSILLTLLLSKYALGHEVWFSETFPNESIENWVQSTYNAEKQGEFKVEAGKSPVDPIEDLGLKTTQDARFYGIARKISEPFSNRGKTMVLQFTVKFDKTVSCGGAYIKLLGSDIDPKKFHGESPYKIMFGPDICGMATKKVHVIFNYKGKNHLIKKEIPCKDDLKTHLYTLIVNPNNKYEVLVDNAKVEEGSLEDDWDMLPPKKIDDPNDKKPDDWVDEQFIDDPDDKKPDNWDQPKTIPDMDAKKPDDWDDAMDGEWERPQKDNPEYKGEWTPRRIDNPKYKGEWKPVQIDNPEYKHDPELYVLNDIGYVGFDLWQVDSGSIFDNILITDSPDFAKEEGERLWRKRYDAEVAKEQSSAKDDKEEAEETKERKELPYDAKASDEPSGDHDEL</sequence>
<dbReference type="EMBL" id="M93097">
    <property type="protein sequence ID" value="AAA29854.1"/>
    <property type="molecule type" value="mRNA"/>
</dbReference>
<dbReference type="EMBL" id="L24159">
    <property type="protein sequence ID" value="AAA19024.1"/>
    <property type="molecule type" value="Genomic_DNA"/>
</dbReference>
<dbReference type="PIR" id="A48573">
    <property type="entry name" value="A48573"/>
</dbReference>
<dbReference type="SMR" id="Q06814"/>
<dbReference type="FunCoup" id="Q06814">
    <property type="interactions" value="1866"/>
</dbReference>
<dbReference type="STRING" id="6183.Q06814"/>
<dbReference type="eggNOG" id="KOG0674">
    <property type="taxonomic scope" value="Eukaryota"/>
</dbReference>
<dbReference type="HOGENOM" id="CLU_018224_0_2_1"/>
<dbReference type="InParanoid" id="Q06814"/>
<dbReference type="Proteomes" id="UP000008854">
    <property type="component" value="Unassembled WGS sequence"/>
</dbReference>
<dbReference type="GO" id="GO:0005788">
    <property type="term" value="C:endoplasmic reticulum lumen"/>
    <property type="evidence" value="ECO:0007669"/>
    <property type="project" value="UniProtKB-SubCell"/>
</dbReference>
<dbReference type="GO" id="GO:0005789">
    <property type="term" value="C:endoplasmic reticulum membrane"/>
    <property type="evidence" value="ECO:0007669"/>
    <property type="project" value="TreeGrafter"/>
</dbReference>
<dbReference type="GO" id="GO:0005509">
    <property type="term" value="F:calcium ion binding"/>
    <property type="evidence" value="ECO:0007669"/>
    <property type="project" value="InterPro"/>
</dbReference>
<dbReference type="GO" id="GO:0030246">
    <property type="term" value="F:carbohydrate binding"/>
    <property type="evidence" value="ECO:0007669"/>
    <property type="project" value="UniProtKB-KW"/>
</dbReference>
<dbReference type="GO" id="GO:0051082">
    <property type="term" value="F:unfolded protein binding"/>
    <property type="evidence" value="ECO:0007669"/>
    <property type="project" value="InterPro"/>
</dbReference>
<dbReference type="GO" id="GO:0036503">
    <property type="term" value="P:ERAD pathway"/>
    <property type="evidence" value="ECO:0007669"/>
    <property type="project" value="TreeGrafter"/>
</dbReference>
<dbReference type="GO" id="GO:0006457">
    <property type="term" value="P:protein folding"/>
    <property type="evidence" value="ECO:0007669"/>
    <property type="project" value="InterPro"/>
</dbReference>
<dbReference type="FunFam" id="2.10.250.10:FF:000002">
    <property type="entry name" value="Calreticulin"/>
    <property type="match status" value="1"/>
</dbReference>
<dbReference type="FunFam" id="2.60.120.200:FF:000018">
    <property type="entry name" value="Calreticulin 1b"/>
    <property type="match status" value="1"/>
</dbReference>
<dbReference type="Gene3D" id="2.60.120.200">
    <property type="match status" value="1"/>
</dbReference>
<dbReference type="Gene3D" id="2.10.250.10">
    <property type="entry name" value="Calreticulin/calnexin, P domain"/>
    <property type="match status" value="1"/>
</dbReference>
<dbReference type="InterPro" id="IPR001580">
    <property type="entry name" value="Calret/calnex"/>
</dbReference>
<dbReference type="InterPro" id="IPR018124">
    <property type="entry name" value="Calret/calnex_CS"/>
</dbReference>
<dbReference type="InterPro" id="IPR009169">
    <property type="entry name" value="Calreticulin"/>
</dbReference>
<dbReference type="InterPro" id="IPR009033">
    <property type="entry name" value="Calreticulin/calnexin_P_dom_sf"/>
</dbReference>
<dbReference type="InterPro" id="IPR013320">
    <property type="entry name" value="ConA-like_dom_sf"/>
</dbReference>
<dbReference type="PANTHER" id="PTHR11073:SF2">
    <property type="entry name" value="CALRETICULIN"/>
    <property type="match status" value="1"/>
</dbReference>
<dbReference type="PANTHER" id="PTHR11073">
    <property type="entry name" value="CALRETICULIN AND CALNEXIN"/>
    <property type="match status" value="1"/>
</dbReference>
<dbReference type="Pfam" id="PF00262">
    <property type="entry name" value="Calreticulin"/>
    <property type="match status" value="2"/>
</dbReference>
<dbReference type="PIRSF" id="PIRSF002356">
    <property type="entry name" value="Calreticulin"/>
    <property type="match status" value="1"/>
</dbReference>
<dbReference type="PRINTS" id="PR00626">
    <property type="entry name" value="CALRETICULIN"/>
</dbReference>
<dbReference type="SUPFAM" id="SSF49899">
    <property type="entry name" value="Concanavalin A-like lectins/glucanases"/>
    <property type="match status" value="1"/>
</dbReference>
<dbReference type="SUPFAM" id="SSF63887">
    <property type="entry name" value="P-domain of calnexin/calreticulin"/>
    <property type="match status" value="1"/>
</dbReference>
<dbReference type="PROSITE" id="PS00803">
    <property type="entry name" value="CALRETICULIN_1"/>
    <property type="match status" value="1"/>
</dbReference>
<dbReference type="PROSITE" id="PS00804">
    <property type="entry name" value="CALRETICULIN_2"/>
    <property type="match status" value="1"/>
</dbReference>
<dbReference type="PROSITE" id="PS00805">
    <property type="entry name" value="CALRETICULIN_REPEAT"/>
    <property type="match status" value="1"/>
</dbReference>
<dbReference type="PROSITE" id="PS00014">
    <property type="entry name" value="ER_TARGET"/>
    <property type="match status" value="1"/>
</dbReference>